<evidence type="ECO:0000250" key="1">
    <source>
        <dbReference type="UniProtKB" id="Q9D0R4"/>
    </source>
</evidence>
<evidence type="ECO:0000250" key="2">
    <source>
        <dbReference type="UniProtKB" id="Q9NY93"/>
    </source>
</evidence>
<evidence type="ECO:0000255" key="3">
    <source>
        <dbReference type="PROSITE-ProRule" id="PRU00541"/>
    </source>
</evidence>
<evidence type="ECO:0000255" key="4">
    <source>
        <dbReference type="PROSITE-ProRule" id="PRU00542"/>
    </source>
</evidence>
<evidence type="ECO:0000256" key="5">
    <source>
        <dbReference type="SAM" id="MobiDB-lite"/>
    </source>
</evidence>
<evidence type="ECO:0000305" key="6"/>
<reference key="1">
    <citation type="submission" date="2005-08" db="EMBL/GenBank/DDBJ databases">
        <authorList>
            <consortium name="NIH - Mammalian Gene Collection (MGC) project"/>
        </authorList>
    </citation>
    <scope>NUCLEOTIDE SEQUENCE [LARGE SCALE MRNA]</scope>
    <source>
        <strain>Hereford</strain>
        <tissue>Hypothalamus</tissue>
    </source>
</reference>
<protein>
    <recommendedName>
        <fullName>Probable ATP-dependent RNA helicase DDX56</fullName>
        <ecNumber>3.6.4.13</ecNumber>
    </recommendedName>
    <alternativeName>
        <fullName>DEAD box protein 56</fullName>
    </alternativeName>
</protein>
<comment type="function">
    <text evidence="1 2">Nucleolar RNA helicase that plays a role in various biological processes including innate immunity, ribosome biogenesis or nucleolus organization. Plays an essential role in maintaining nucleolar integrity in planarian stem cells (By similarity). Maintains embryonic stem cells proliferation by conventional regulation of ribosome assembly and interaction with OCT4 and POU5F1 complex (By similarity). Regulates antiviral innate immunity by inhibiting the virus-triggered signaling nuclear translocation of IRF3. Mechanistically, acts by disrupting the interaction between IRF3 and importin IPO5. May play a role in later stages of the processing of the pre-ribosomal particles leading to mature 60S ribosomal subunits. Has intrinsic ATPase activity (By similarity).</text>
</comment>
<comment type="catalytic activity">
    <reaction>
        <text>ATP + H2O = ADP + phosphate + H(+)</text>
        <dbReference type="Rhea" id="RHEA:13065"/>
        <dbReference type="ChEBI" id="CHEBI:15377"/>
        <dbReference type="ChEBI" id="CHEBI:15378"/>
        <dbReference type="ChEBI" id="CHEBI:30616"/>
        <dbReference type="ChEBI" id="CHEBI:43474"/>
        <dbReference type="ChEBI" id="CHEBI:456216"/>
        <dbReference type="EC" id="3.6.4.13"/>
    </reaction>
</comment>
<comment type="subunit">
    <text evidence="1 2">May form homooligomeric complexes. Interacts with IRF3 (By similarity). Interacts with OCT4 and POU5F1 (By similarity).</text>
</comment>
<comment type="subcellular location">
    <subcellularLocation>
        <location evidence="2">Nucleus</location>
        <location evidence="2">Nucleolus</location>
    </subcellularLocation>
</comment>
<comment type="similarity">
    <text evidence="6">Belongs to the DEAD box helicase family. DDX56/DBP9 subfamily.</text>
</comment>
<keyword id="KW-0067">ATP-binding</keyword>
<keyword id="KW-0347">Helicase</keyword>
<keyword id="KW-0378">Hydrolase</keyword>
<keyword id="KW-0547">Nucleotide-binding</keyword>
<keyword id="KW-0539">Nucleus</keyword>
<keyword id="KW-0597">Phosphoprotein</keyword>
<keyword id="KW-1185">Reference proteome</keyword>
<keyword id="KW-0690">Ribosome biogenesis</keyword>
<keyword id="KW-0694">RNA-binding</keyword>
<keyword id="KW-0698">rRNA processing</keyword>
<organism>
    <name type="scientific">Bos taurus</name>
    <name type="common">Bovine</name>
    <dbReference type="NCBI Taxonomy" id="9913"/>
    <lineage>
        <taxon>Eukaryota</taxon>
        <taxon>Metazoa</taxon>
        <taxon>Chordata</taxon>
        <taxon>Craniata</taxon>
        <taxon>Vertebrata</taxon>
        <taxon>Euteleostomi</taxon>
        <taxon>Mammalia</taxon>
        <taxon>Eutheria</taxon>
        <taxon>Laurasiatheria</taxon>
        <taxon>Artiodactyla</taxon>
        <taxon>Ruminantia</taxon>
        <taxon>Pecora</taxon>
        <taxon>Bovidae</taxon>
        <taxon>Bovinae</taxon>
        <taxon>Bos</taxon>
    </lineage>
</organism>
<sequence length="546" mass="61254">MEDPESLGFEHMGLDHRLLQAVTDLGWSRPTLIQEKAIPLALEGKDLLARARTGSGKTAAYAIPMLQLLLHRKATGPVVEQAVRALVLVPTKELARQAQSMIQQLAAYCARDIRVANVSAAEDSASQRAVLMEKPDVVVGTPSRILNHLQQDNLKLRDSMELLVVDEADLLFSFGFEEELKSLLCHLPRIYQAFLMSATFNEDVQALKELVLHNPVTLKLQESQLPGPDQLQQFQVVCETEEDKFLLLYALLKLSLIRGKSLLFVNTLERSYRLRLFLEQFSIPACVLNGELPLRSRCHIISQFNQGFYDCVIATDAEVLGPPVKGKHRGKGPKRDKASDPEAGVARGIDFHHVCAVLNFDLPPTPEAYIHRAGRTARANNPGIVLTFVLPTEQSQLGKIEELLSGDSGAPVLLPYQFHMEEIEGFRYRCRDAMRSVTKQAIREARLKEIKEELLHSEKLKTYFEDNPRDLQLLRHDLPLHPAVVKPHLGNVPDYLVPPALRGLVHPHKKRKKPLASKKAKKAKTQNPLRSFKHRGEKCRPTAAPS</sequence>
<feature type="chain" id="PRO_0000282326" description="Probable ATP-dependent RNA helicase DDX56">
    <location>
        <begin position="1"/>
        <end position="546"/>
    </location>
</feature>
<feature type="domain" description="Helicase ATP-binding" evidence="3">
    <location>
        <begin position="38"/>
        <end position="218"/>
    </location>
</feature>
<feature type="domain" description="Helicase C-terminal" evidence="4">
    <location>
        <begin position="230"/>
        <end position="424"/>
    </location>
</feature>
<feature type="region of interest" description="Disordered" evidence="5">
    <location>
        <begin position="323"/>
        <end position="342"/>
    </location>
</feature>
<feature type="region of interest" description="Disordered" evidence="5">
    <location>
        <begin position="504"/>
        <end position="546"/>
    </location>
</feature>
<feature type="short sequence motif" description="Q motif">
    <location>
        <begin position="7"/>
        <end position="35"/>
    </location>
</feature>
<feature type="short sequence motif" description="DEAD box">
    <location>
        <begin position="166"/>
        <end position="169"/>
    </location>
</feature>
<feature type="compositionally biased region" description="Basic residues" evidence="5">
    <location>
        <begin position="505"/>
        <end position="524"/>
    </location>
</feature>
<feature type="binding site" evidence="3">
    <location>
        <begin position="51"/>
        <end position="58"/>
    </location>
    <ligand>
        <name>ATP</name>
        <dbReference type="ChEBI" id="CHEBI:30616"/>
    </ligand>
</feature>
<feature type="modified residue" description="Phosphoserine" evidence="2">
    <location>
        <position position="126"/>
    </location>
</feature>
<feature type="modified residue" description="Phosphothreonine" evidence="2">
    <location>
        <position position="141"/>
    </location>
</feature>
<feature type="modified residue" description="Phosphoserine" evidence="2">
    <location>
        <position position="531"/>
    </location>
</feature>
<name>DDX56_BOVIN</name>
<proteinExistence type="evidence at transcript level"/>
<gene>
    <name type="primary">DDX56</name>
</gene>
<accession>Q3SZ40</accession>
<dbReference type="EC" id="3.6.4.13"/>
<dbReference type="EMBL" id="BC103169">
    <property type="protein sequence ID" value="AAI03170.1"/>
    <property type="molecule type" value="mRNA"/>
</dbReference>
<dbReference type="RefSeq" id="NP_001029501.1">
    <property type="nucleotide sequence ID" value="NM_001034329.2"/>
</dbReference>
<dbReference type="SMR" id="Q3SZ40"/>
<dbReference type="FunCoup" id="Q3SZ40">
    <property type="interactions" value="3270"/>
</dbReference>
<dbReference type="STRING" id="9913.ENSBTAP00000014014"/>
<dbReference type="PaxDb" id="9913-ENSBTAP00000014014"/>
<dbReference type="GeneID" id="508728"/>
<dbReference type="KEGG" id="bta:508728"/>
<dbReference type="CTD" id="54606"/>
<dbReference type="VEuPathDB" id="HostDB:ENSBTAG00000010602"/>
<dbReference type="eggNOG" id="KOG0346">
    <property type="taxonomic scope" value="Eukaryota"/>
</dbReference>
<dbReference type="HOGENOM" id="CLU_003041_17_1_1"/>
<dbReference type="InParanoid" id="Q3SZ40"/>
<dbReference type="OMA" id="NASEQCV"/>
<dbReference type="OrthoDB" id="1191041at2759"/>
<dbReference type="TreeFam" id="TF300620"/>
<dbReference type="CD-CODE" id="D7FE2080">
    <property type="entry name" value="Nucleolus"/>
</dbReference>
<dbReference type="Proteomes" id="UP000009136">
    <property type="component" value="Chromosome 4"/>
</dbReference>
<dbReference type="Bgee" id="ENSBTAG00000010602">
    <property type="expression patterns" value="Expressed in gluteus medius and 105 other cell types or tissues"/>
</dbReference>
<dbReference type="GO" id="GO:0005730">
    <property type="term" value="C:nucleolus"/>
    <property type="evidence" value="ECO:0000318"/>
    <property type="project" value="GO_Central"/>
</dbReference>
<dbReference type="GO" id="GO:0005524">
    <property type="term" value="F:ATP binding"/>
    <property type="evidence" value="ECO:0007669"/>
    <property type="project" value="UniProtKB-KW"/>
</dbReference>
<dbReference type="GO" id="GO:0016887">
    <property type="term" value="F:ATP hydrolysis activity"/>
    <property type="evidence" value="ECO:0007669"/>
    <property type="project" value="RHEA"/>
</dbReference>
<dbReference type="GO" id="GO:0003723">
    <property type="term" value="F:RNA binding"/>
    <property type="evidence" value="ECO:0007669"/>
    <property type="project" value="UniProtKB-KW"/>
</dbReference>
<dbReference type="GO" id="GO:0003724">
    <property type="term" value="F:RNA helicase activity"/>
    <property type="evidence" value="ECO:0007669"/>
    <property type="project" value="UniProtKB-EC"/>
</dbReference>
<dbReference type="GO" id="GO:0006364">
    <property type="term" value="P:rRNA processing"/>
    <property type="evidence" value="ECO:0007669"/>
    <property type="project" value="UniProtKB-KW"/>
</dbReference>
<dbReference type="CDD" id="cd17961">
    <property type="entry name" value="DEADc_DDX56"/>
    <property type="match status" value="1"/>
</dbReference>
<dbReference type="CDD" id="cd18787">
    <property type="entry name" value="SF2_C_DEAD"/>
    <property type="match status" value="1"/>
</dbReference>
<dbReference type="FunFam" id="3.40.50.300:FF:000939">
    <property type="entry name" value="Probable ATP-dependent RNA helicase DDX56"/>
    <property type="match status" value="1"/>
</dbReference>
<dbReference type="FunFam" id="3.40.50.300:FF:001046">
    <property type="entry name" value="Probable ATP-dependent RNA helicase ddx56"/>
    <property type="match status" value="1"/>
</dbReference>
<dbReference type="Gene3D" id="3.40.50.300">
    <property type="entry name" value="P-loop containing nucleotide triphosphate hydrolases"/>
    <property type="match status" value="2"/>
</dbReference>
<dbReference type="InterPro" id="IPR011545">
    <property type="entry name" value="DEAD/DEAH_box_helicase_dom"/>
</dbReference>
<dbReference type="InterPro" id="IPR050079">
    <property type="entry name" value="DEAD_box_RNA_helicase"/>
</dbReference>
<dbReference type="InterPro" id="IPR014001">
    <property type="entry name" value="Helicase_ATP-bd"/>
</dbReference>
<dbReference type="InterPro" id="IPR001650">
    <property type="entry name" value="Helicase_C-like"/>
</dbReference>
<dbReference type="InterPro" id="IPR027417">
    <property type="entry name" value="P-loop_NTPase"/>
</dbReference>
<dbReference type="InterPro" id="IPR014014">
    <property type="entry name" value="RNA_helicase_DEAD_Q_motif"/>
</dbReference>
<dbReference type="PANTHER" id="PTHR47959">
    <property type="entry name" value="ATP-DEPENDENT RNA HELICASE RHLE-RELATED"/>
    <property type="match status" value="1"/>
</dbReference>
<dbReference type="PANTHER" id="PTHR47959:SF21">
    <property type="entry name" value="DEAD-BOX HELICASE 56"/>
    <property type="match status" value="1"/>
</dbReference>
<dbReference type="Pfam" id="PF00270">
    <property type="entry name" value="DEAD"/>
    <property type="match status" value="1"/>
</dbReference>
<dbReference type="Pfam" id="PF00271">
    <property type="entry name" value="Helicase_C"/>
    <property type="match status" value="1"/>
</dbReference>
<dbReference type="SMART" id="SM00487">
    <property type="entry name" value="DEXDc"/>
    <property type="match status" value="1"/>
</dbReference>
<dbReference type="SMART" id="SM00490">
    <property type="entry name" value="HELICc"/>
    <property type="match status" value="1"/>
</dbReference>
<dbReference type="SUPFAM" id="SSF52540">
    <property type="entry name" value="P-loop containing nucleoside triphosphate hydrolases"/>
    <property type="match status" value="2"/>
</dbReference>
<dbReference type="PROSITE" id="PS51192">
    <property type="entry name" value="HELICASE_ATP_BIND_1"/>
    <property type="match status" value="1"/>
</dbReference>
<dbReference type="PROSITE" id="PS51194">
    <property type="entry name" value="HELICASE_CTER"/>
    <property type="match status" value="1"/>
</dbReference>
<dbReference type="PROSITE" id="PS51195">
    <property type="entry name" value="Q_MOTIF"/>
    <property type="match status" value="1"/>
</dbReference>